<name>RL4_PHYMT</name>
<proteinExistence type="inferred from homology"/>
<keyword id="KW-1185">Reference proteome</keyword>
<keyword id="KW-0687">Ribonucleoprotein</keyword>
<keyword id="KW-0689">Ribosomal protein</keyword>
<keyword id="KW-0694">RNA-binding</keyword>
<keyword id="KW-0699">rRNA-binding</keyword>
<dbReference type="EMBL" id="CU469464">
    <property type="protein sequence ID" value="CAP18529.1"/>
    <property type="molecule type" value="Genomic_DNA"/>
</dbReference>
<dbReference type="SMR" id="B3QZZ2"/>
<dbReference type="STRING" id="37692.ATP_00342"/>
<dbReference type="KEGG" id="pml:ATP_00342"/>
<dbReference type="eggNOG" id="COG0088">
    <property type="taxonomic scope" value="Bacteria"/>
</dbReference>
<dbReference type="HOGENOM" id="CLU_041575_5_2_14"/>
<dbReference type="Proteomes" id="UP000002020">
    <property type="component" value="Chromosome"/>
</dbReference>
<dbReference type="GO" id="GO:1990904">
    <property type="term" value="C:ribonucleoprotein complex"/>
    <property type="evidence" value="ECO:0007669"/>
    <property type="project" value="UniProtKB-KW"/>
</dbReference>
<dbReference type="GO" id="GO:0005840">
    <property type="term" value="C:ribosome"/>
    <property type="evidence" value="ECO:0007669"/>
    <property type="project" value="UniProtKB-KW"/>
</dbReference>
<dbReference type="GO" id="GO:0019843">
    <property type="term" value="F:rRNA binding"/>
    <property type="evidence" value="ECO:0007669"/>
    <property type="project" value="UniProtKB-UniRule"/>
</dbReference>
<dbReference type="GO" id="GO:0003735">
    <property type="term" value="F:structural constituent of ribosome"/>
    <property type="evidence" value="ECO:0007669"/>
    <property type="project" value="InterPro"/>
</dbReference>
<dbReference type="GO" id="GO:0006412">
    <property type="term" value="P:translation"/>
    <property type="evidence" value="ECO:0007669"/>
    <property type="project" value="UniProtKB-UniRule"/>
</dbReference>
<dbReference type="Gene3D" id="3.40.1370.10">
    <property type="match status" value="1"/>
</dbReference>
<dbReference type="HAMAP" id="MF_01328_B">
    <property type="entry name" value="Ribosomal_uL4_B"/>
    <property type="match status" value="1"/>
</dbReference>
<dbReference type="InterPro" id="IPR002136">
    <property type="entry name" value="Ribosomal_uL4"/>
</dbReference>
<dbReference type="InterPro" id="IPR013005">
    <property type="entry name" value="Ribosomal_uL4-like"/>
</dbReference>
<dbReference type="InterPro" id="IPR023574">
    <property type="entry name" value="Ribosomal_uL4_dom_sf"/>
</dbReference>
<dbReference type="NCBIfam" id="TIGR03953">
    <property type="entry name" value="rplD_bact"/>
    <property type="match status" value="1"/>
</dbReference>
<dbReference type="PANTHER" id="PTHR10746">
    <property type="entry name" value="50S RIBOSOMAL PROTEIN L4"/>
    <property type="match status" value="1"/>
</dbReference>
<dbReference type="PANTHER" id="PTHR10746:SF6">
    <property type="entry name" value="LARGE RIBOSOMAL SUBUNIT PROTEIN UL4M"/>
    <property type="match status" value="1"/>
</dbReference>
<dbReference type="Pfam" id="PF00573">
    <property type="entry name" value="Ribosomal_L4"/>
    <property type="match status" value="1"/>
</dbReference>
<dbReference type="SUPFAM" id="SSF52166">
    <property type="entry name" value="Ribosomal protein L4"/>
    <property type="match status" value="1"/>
</dbReference>
<comment type="function">
    <text evidence="1">One of the primary rRNA binding proteins, this protein initially binds near the 5'-end of the 23S rRNA. It is important during the early stages of 50S assembly. It makes multiple contacts with different domains of the 23S rRNA in the assembled 50S subunit and ribosome.</text>
</comment>
<comment type="function">
    <text evidence="1">Forms part of the polypeptide exit tunnel.</text>
</comment>
<comment type="subunit">
    <text evidence="1">Part of the 50S ribosomal subunit.</text>
</comment>
<comment type="similarity">
    <text evidence="1">Belongs to the universal ribosomal protein uL4 family.</text>
</comment>
<accession>B3QZZ2</accession>
<protein>
    <recommendedName>
        <fullName evidence="1">Large ribosomal subunit protein uL4</fullName>
    </recommendedName>
    <alternativeName>
        <fullName evidence="3">50S ribosomal protein L4</fullName>
    </alternativeName>
</protein>
<reference key="1">
    <citation type="journal article" date="2008" name="BMC Genomics">
        <title>The linear chromosome of the plant-pathogenic mycoplasma 'Candidatus Phytoplasma mali'.</title>
        <authorList>
            <person name="Kube M."/>
            <person name="Schneider B."/>
            <person name="Kuhl H."/>
            <person name="Dandekar T."/>
            <person name="Heitmann K."/>
            <person name="Migdoll A.M."/>
            <person name="Reinhardt R."/>
            <person name="Seemueller E."/>
        </authorList>
    </citation>
    <scope>NUCLEOTIDE SEQUENCE [LARGE SCALE GENOMIC DNA]</scope>
    <source>
        <strain>AT</strain>
    </source>
</reference>
<feature type="chain" id="PRO_1000166019" description="Large ribosomal subunit protein uL4">
    <location>
        <begin position="1"/>
        <end position="207"/>
    </location>
</feature>
<feature type="region of interest" description="Disordered" evidence="2">
    <location>
        <begin position="55"/>
        <end position="76"/>
    </location>
</feature>
<feature type="compositionally biased region" description="Basic residues" evidence="2">
    <location>
        <begin position="63"/>
        <end position="76"/>
    </location>
</feature>
<organism>
    <name type="scientific">Phytoplasma mali (strain AT)</name>
    <dbReference type="NCBI Taxonomy" id="482235"/>
    <lineage>
        <taxon>Bacteria</taxon>
        <taxon>Bacillati</taxon>
        <taxon>Mycoplasmatota</taxon>
        <taxon>Mollicutes</taxon>
        <taxon>Acholeplasmatales</taxon>
        <taxon>Acholeplasmataceae</taxon>
        <taxon>Candidatus Phytoplasma</taxon>
        <taxon>16SrX (Apple proliferation group)</taxon>
    </lineage>
</organism>
<gene>
    <name evidence="1" type="primary">rplD</name>
    <name type="ordered locus">ATP_00342</name>
</gene>
<evidence type="ECO:0000255" key="1">
    <source>
        <dbReference type="HAMAP-Rule" id="MF_01328"/>
    </source>
</evidence>
<evidence type="ECO:0000256" key="2">
    <source>
        <dbReference type="SAM" id="MobiDB-lite"/>
    </source>
</evidence>
<evidence type="ECO:0000305" key="3"/>
<sequence>MPKYNLINQKGDFLSQIDLDDEIFGISINKQVLYDVVNAQRASMRQGTHATKNRALVSGGGKKPWRQKGTGRARHGTIRSPLWRGGGVAFGPSPRDYSVKVNQKVRRLALKMALSWKINNKNLILIDNINLETHKTKEFQNILDQLNIQQKTLILTKDLNHNLCLSIRNLSKVLLETVSHVSVYQLLSYSTIILTKEAANYFEENLK</sequence>